<dbReference type="EMBL" id="AE000657">
    <property type="protein sequence ID" value="AAC07453.1"/>
    <property type="molecule type" value="Genomic_DNA"/>
</dbReference>
<dbReference type="PIR" id="B70433">
    <property type="entry name" value="B70433"/>
</dbReference>
<dbReference type="RefSeq" id="NP_214057.1">
    <property type="nucleotide sequence ID" value="NC_000918.1"/>
</dbReference>
<dbReference type="RefSeq" id="WP_010880995.1">
    <property type="nucleotide sequence ID" value="NC_000918.1"/>
</dbReference>
<dbReference type="SMR" id="O67492"/>
<dbReference type="STRING" id="224324.aq_1534"/>
<dbReference type="EnsemblBacteria" id="AAC07453">
    <property type="protein sequence ID" value="AAC07453"/>
    <property type="gene ID" value="aq_1534"/>
</dbReference>
<dbReference type="KEGG" id="aae:aq_1534"/>
<dbReference type="eggNOG" id="COG3009">
    <property type="taxonomic scope" value="Bacteria"/>
</dbReference>
<dbReference type="HOGENOM" id="CLU_1567441_0_0_0"/>
<dbReference type="InParanoid" id="O67492"/>
<dbReference type="OrthoDB" id="2041081at2"/>
<dbReference type="Proteomes" id="UP000000798">
    <property type="component" value="Chromosome"/>
</dbReference>
<dbReference type="SUPFAM" id="SSF159594">
    <property type="entry name" value="XCC0632-like"/>
    <property type="match status" value="1"/>
</dbReference>
<accession>O67492</accession>
<reference key="1">
    <citation type="journal article" date="1998" name="Nature">
        <title>The complete genome of the hyperthermophilic bacterium Aquifex aeolicus.</title>
        <authorList>
            <person name="Deckert G."/>
            <person name="Warren P.V."/>
            <person name="Gaasterland T."/>
            <person name="Young W.G."/>
            <person name="Lenox A.L."/>
            <person name="Graham D.E."/>
            <person name="Overbeek R."/>
            <person name="Snead M.A."/>
            <person name="Keller M."/>
            <person name="Aujay M."/>
            <person name="Huber R."/>
            <person name="Feldman R.A."/>
            <person name="Short J.M."/>
            <person name="Olsen G.J."/>
            <person name="Swanson R.V."/>
        </authorList>
    </citation>
    <scope>NUCLEOTIDE SEQUENCE [LARGE SCALE GENOMIC DNA]</scope>
    <source>
        <strain>VF5</strain>
    </source>
</reference>
<organism>
    <name type="scientific">Aquifex aeolicus (strain VF5)</name>
    <dbReference type="NCBI Taxonomy" id="224324"/>
    <lineage>
        <taxon>Bacteria</taxon>
        <taxon>Pseudomonadati</taxon>
        <taxon>Aquificota</taxon>
        <taxon>Aquificia</taxon>
        <taxon>Aquificales</taxon>
        <taxon>Aquificaceae</taxon>
        <taxon>Aquifex</taxon>
    </lineage>
</organism>
<feature type="chain" id="PRO_0000186933" description="Uncharacterized protein aq_1534">
    <location>
        <begin position="1"/>
        <end position="170"/>
    </location>
</feature>
<sequence>MVRLLLIFVLILSCVPKQEHPLMHNLEPSGEADFKVIELRVPEYLDTERIMYKTDKGFYYFAKNVWVCELSCVLENYFKKAQGGEEKVYLEVLDFYPVFTGKKEGYVYLRARVDRKKEYVYKIPFKVRSFEEIILKMNEAVNRLLEDVNKYVQITTSSKSISDSGLPTPP</sequence>
<keyword id="KW-1185">Reference proteome</keyword>
<name>Y1534_AQUAE</name>
<protein>
    <recommendedName>
        <fullName>Uncharacterized protein aq_1534</fullName>
    </recommendedName>
</protein>
<gene>
    <name type="ordered locus">aq_1534</name>
</gene>
<proteinExistence type="predicted"/>